<evidence type="ECO:0000255" key="1">
    <source>
        <dbReference type="HAMAP-Rule" id="MF_04079"/>
    </source>
</evidence>
<evidence type="ECO:0000256" key="2">
    <source>
        <dbReference type="SAM" id="MobiDB-lite"/>
    </source>
</evidence>
<evidence type="ECO:0000305" key="3"/>
<name>TAT_HV1M2</name>
<sequence length="101" mass="11556">MEVVDPNLDPWKHPGSQPETPCNKCYCKKCCFHCQLCFTRKGLGISYGRKKRRQRRRTPQSGEVHQDPVSKQPLSQTRGDPKGPEESKKKVESKTKTDPSD</sequence>
<accession>P0C1K0</accession>
<protein>
    <recommendedName>
        <fullName evidence="1">Protein Tat</fullName>
    </recommendedName>
    <alternativeName>
        <fullName evidence="1">Transactivating regulatory protein</fullName>
    </alternativeName>
</protein>
<dbReference type="EMBL" id="AJ249237">
    <property type="status" value="NOT_ANNOTATED_CDS"/>
    <property type="molecule type" value="Genomic_RNA"/>
</dbReference>
<dbReference type="SMR" id="P0C1K0"/>
<dbReference type="Proteomes" id="UP000121652">
    <property type="component" value="Segment"/>
</dbReference>
<dbReference type="GO" id="GO:0005576">
    <property type="term" value="C:extracellular region"/>
    <property type="evidence" value="ECO:0007669"/>
    <property type="project" value="UniProtKB-SubCell"/>
</dbReference>
<dbReference type="GO" id="GO:0030430">
    <property type="term" value="C:host cell cytoplasm"/>
    <property type="evidence" value="ECO:0007669"/>
    <property type="project" value="UniProtKB-SubCell"/>
</dbReference>
<dbReference type="GO" id="GO:0044196">
    <property type="term" value="C:host cell nucleolus"/>
    <property type="evidence" value="ECO:0007669"/>
    <property type="project" value="UniProtKB-SubCell"/>
</dbReference>
<dbReference type="GO" id="GO:0042805">
    <property type="term" value="F:actinin binding"/>
    <property type="evidence" value="ECO:0007669"/>
    <property type="project" value="UniProtKB-UniRule"/>
</dbReference>
<dbReference type="GO" id="GO:0030332">
    <property type="term" value="F:cyclin binding"/>
    <property type="evidence" value="ECO:0007669"/>
    <property type="project" value="UniProtKB-UniRule"/>
</dbReference>
<dbReference type="GO" id="GO:0046872">
    <property type="term" value="F:metal ion binding"/>
    <property type="evidence" value="ECO:0007669"/>
    <property type="project" value="UniProtKB-UniRule"/>
</dbReference>
<dbReference type="GO" id="GO:0019904">
    <property type="term" value="F:protein domain specific binding"/>
    <property type="evidence" value="ECO:0007669"/>
    <property type="project" value="UniProtKB-UniRule"/>
</dbReference>
<dbReference type="GO" id="GO:0004865">
    <property type="term" value="F:protein serine/threonine phosphatase inhibitor activity"/>
    <property type="evidence" value="ECO:0007669"/>
    <property type="project" value="UniProtKB-KW"/>
</dbReference>
<dbReference type="GO" id="GO:0001070">
    <property type="term" value="F:RNA-binding transcription regulator activity"/>
    <property type="evidence" value="ECO:0007669"/>
    <property type="project" value="UniProtKB-UniRule"/>
</dbReference>
<dbReference type="GO" id="GO:1990970">
    <property type="term" value="F:trans-activation response element binding"/>
    <property type="evidence" value="ECO:0007669"/>
    <property type="project" value="UniProtKB-UniRule"/>
</dbReference>
<dbReference type="GO" id="GO:0006351">
    <property type="term" value="P:DNA-templated transcription"/>
    <property type="evidence" value="ECO:0007669"/>
    <property type="project" value="UniProtKB-UniRule"/>
</dbReference>
<dbReference type="GO" id="GO:0032968">
    <property type="term" value="P:positive regulation of transcription elongation by RNA polymerase II"/>
    <property type="evidence" value="ECO:0007669"/>
    <property type="project" value="UniProtKB-UniRule"/>
</dbReference>
<dbReference type="GO" id="GO:0050434">
    <property type="term" value="P:positive regulation of viral transcription"/>
    <property type="evidence" value="ECO:0007669"/>
    <property type="project" value="UniProtKB-UniRule"/>
</dbReference>
<dbReference type="GO" id="GO:0039525">
    <property type="term" value="P:symbiont-mediated perturbation of host chromatin organization"/>
    <property type="evidence" value="ECO:0007669"/>
    <property type="project" value="UniProtKB-UniRule"/>
</dbReference>
<dbReference type="GO" id="GO:0052170">
    <property type="term" value="P:symbiont-mediated suppression of host innate immune response"/>
    <property type="evidence" value="ECO:0007669"/>
    <property type="project" value="UniProtKB-KW"/>
</dbReference>
<dbReference type="GO" id="GO:0039606">
    <property type="term" value="P:symbiont-mediated suppression of host translation initiation"/>
    <property type="evidence" value="ECO:0007669"/>
    <property type="project" value="UniProtKB-KW"/>
</dbReference>
<dbReference type="GO" id="GO:0039502">
    <property type="term" value="P:symbiont-mediated suppression of host type I interferon-mediated signaling pathway"/>
    <property type="evidence" value="ECO:0007669"/>
    <property type="project" value="UniProtKB-UniRule"/>
</dbReference>
<dbReference type="Gene3D" id="4.10.20.10">
    <property type="entry name" value="Tat domain"/>
    <property type="match status" value="1"/>
</dbReference>
<dbReference type="HAMAP" id="MF_04079">
    <property type="entry name" value="HIV_TAT"/>
    <property type="match status" value="1"/>
</dbReference>
<dbReference type="InterPro" id="IPR001831">
    <property type="entry name" value="IV_Tat"/>
</dbReference>
<dbReference type="InterPro" id="IPR036963">
    <property type="entry name" value="Tat_dom_sf"/>
</dbReference>
<dbReference type="Pfam" id="PF00539">
    <property type="entry name" value="Tat"/>
    <property type="match status" value="1"/>
</dbReference>
<dbReference type="PRINTS" id="PR00055">
    <property type="entry name" value="HIVTATDOMAIN"/>
</dbReference>
<keyword id="KW-0007">Acetylation</keyword>
<keyword id="KW-0010">Activator</keyword>
<keyword id="KW-0014">AIDS</keyword>
<keyword id="KW-0025">Alternative splicing</keyword>
<keyword id="KW-0053">Apoptosis</keyword>
<keyword id="KW-1035">Host cytoplasm</keyword>
<keyword id="KW-1048">Host nucleus</keyword>
<keyword id="KW-0945">Host-virus interaction</keyword>
<keyword id="KW-1090">Inhibition of host innate immune response by virus</keyword>
<keyword id="KW-1114">Inhibition of host interferon signaling pathway by virus</keyword>
<keyword id="KW-0922">Interferon antiviral system evasion</keyword>
<keyword id="KW-1017">Isopeptide bond</keyword>
<keyword id="KW-0479">Metal-binding</keyword>
<keyword id="KW-0488">Methylation</keyword>
<keyword id="KW-1122">Modulation of host chromatin by virus</keyword>
<keyword id="KW-1126">Modulation of host PP1 activity by virus</keyword>
<keyword id="KW-0597">Phosphoprotein</keyword>
<keyword id="KW-0694">RNA-binding</keyword>
<keyword id="KW-0964">Secreted</keyword>
<keyword id="KW-0804">Transcription</keyword>
<keyword id="KW-0805">Transcription regulation</keyword>
<keyword id="KW-0832">Ubl conjugation</keyword>
<keyword id="KW-0899">Viral immunoevasion</keyword>
<keyword id="KW-0862">Zinc</keyword>
<gene>
    <name evidence="1" type="primary">tat</name>
</gene>
<feature type="chain" id="PRO_0000244853" description="Protein Tat">
    <location>
        <begin position="1"/>
        <end position="101"/>
    </location>
</feature>
<feature type="region of interest" description="Transactivation" evidence="1">
    <location>
        <begin position="1"/>
        <end position="48"/>
    </location>
</feature>
<feature type="region of interest" description="Interaction with human CREBBP" evidence="1">
    <location>
        <begin position="1"/>
        <end position="24"/>
    </location>
</feature>
<feature type="region of interest" description="Disordered" evidence="2">
    <location>
        <begin position="1"/>
        <end position="20"/>
    </location>
</feature>
<feature type="region of interest" description="Cysteine-rich" evidence="1">
    <location>
        <begin position="22"/>
        <end position="37"/>
    </location>
</feature>
<feature type="region of interest" description="Core" evidence="1">
    <location>
        <begin position="38"/>
        <end position="48"/>
    </location>
</feature>
<feature type="region of interest" description="Disordered" evidence="2">
    <location>
        <begin position="47"/>
        <end position="101"/>
    </location>
</feature>
<feature type="region of interest" description="Interaction with the host capping enzyme RNGTT" evidence="1">
    <location>
        <begin position="49"/>
        <end position="86"/>
    </location>
</feature>
<feature type="short sequence motif" description="Nuclear localization signal, RNA-binding (TAR), and protein transduction" evidence="1">
    <location>
        <begin position="49"/>
        <end position="57"/>
    </location>
</feature>
<feature type="short sequence motif" description="Cell attachment site" evidence="1">
    <location>
        <begin position="78"/>
        <end position="80"/>
    </location>
</feature>
<feature type="compositionally biased region" description="Basic residues" evidence="2">
    <location>
        <begin position="48"/>
        <end position="58"/>
    </location>
</feature>
<feature type="compositionally biased region" description="Basic and acidic residues" evidence="2">
    <location>
        <begin position="79"/>
        <end position="101"/>
    </location>
</feature>
<feature type="binding site" evidence="1">
    <location>
        <position position="22"/>
    </location>
    <ligand>
        <name>Zn(2+)</name>
        <dbReference type="ChEBI" id="CHEBI:29105"/>
        <label>1</label>
    </ligand>
</feature>
<feature type="binding site" evidence="1">
    <location>
        <position position="25"/>
    </location>
    <ligand>
        <name>Zn(2+)</name>
        <dbReference type="ChEBI" id="CHEBI:29105"/>
        <label>2</label>
    </ligand>
</feature>
<feature type="binding site" evidence="1">
    <location>
        <position position="27"/>
    </location>
    <ligand>
        <name>Zn(2+)</name>
        <dbReference type="ChEBI" id="CHEBI:29105"/>
        <label>2</label>
    </ligand>
</feature>
<feature type="binding site" evidence="1">
    <location>
        <position position="30"/>
    </location>
    <ligand>
        <name>Zn(2+)</name>
        <dbReference type="ChEBI" id="CHEBI:29105"/>
        <label>2</label>
    </ligand>
</feature>
<feature type="binding site" evidence="1">
    <location>
        <position position="33"/>
    </location>
    <ligand>
        <name>Zn(2+)</name>
        <dbReference type="ChEBI" id="CHEBI:29105"/>
        <label>1</label>
    </ligand>
</feature>
<feature type="binding site" evidence="1">
    <location>
        <position position="34"/>
    </location>
    <ligand>
        <name>Zn(2+)</name>
        <dbReference type="ChEBI" id="CHEBI:29105"/>
        <label>1</label>
    </ligand>
</feature>
<feature type="binding site" evidence="1">
    <location>
        <position position="37"/>
    </location>
    <ligand>
        <name>Zn(2+)</name>
        <dbReference type="ChEBI" id="CHEBI:29105"/>
        <label>1</label>
    </ligand>
</feature>
<feature type="site" description="Essential for Tat translocation through the endosomal membrane" evidence="1">
    <location>
        <position position="11"/>
    </location>
</feature>
<feature type="modified residue" description="N6-acetyllysine; by host PCAF" evidence="1">
    <location>
        <position position="28"/>
    </location>
</feature>
<feature type="modified residue" description="N6-acetyllysine; by host EP300 and GCN5L2" evidence="1">
    <location>
        <position position="50"/>
    </location>
</feature>
<feature type="modified residue" description="N6-acetyllysine; by host EP300 and GCN5L2" evidence="1">
    <location>
        <position position="51"/>
    </location>
</feature>
<feature type="modified residue" description="Asymmetric dimethylarginine; by host PRMT6" evidence="1">
    <location>
        <position position="52"/>
    </location>
</feature>
<feature type="modified residue" description="Asymmetric dimethylarginine; by host PRMT6" evidence="1">
    <location>
        <position position="53"/>
    </location>
</feature>
<feature type="cross-link" description="Glycyl lysine isopeptide (Lys-Gly) (interchain with G-Cter in ubiquitin)" evidence="1">
    <location>
        <position position="71"/>
    </location>
</feature>
<feature type="splice variant" id="VSP_022417" description="In isoform Short.">
    <location>
        <begin position="73"/>
        <end position="101"/>
    </location>
</feature>
<proteinExistence type="inferred from homology"/>
<comment type="function">
    <text evidence="1">Transcriptional activator that increases RNA Pol II processivity, thereby increasing the level of full-length viral transcripts. Recognizes a hairpin structure at the 5'-LTR of the nascent viral mRNAs referred to as the transactivation responsive RNA element (TAR) and recruits the cyclin T1-CDK9 complex (P-TEFb complex) that will in turn hyperphosphorylate the RNA polymerase II to allow efficient elongation. The CDK9 component of P-TEFb and other Tat-activated kinases hyperphosphorylate the C-terminus of RNA Pol II that becomes stabilized and much more processive. Other factors such as HTATSF1/Tat-SF1, SUPT5H/SPT5, and HTATIP2 are also important for Tat's function. Besides its effect on RNA Pol II processivity, Tat induces chromatin remodeling of proviral genes by recruiting the histone acetyltransferases (HATs) CREBBP, EP300 and PCAF to the chromatin. This also contributes to the increase in proviral transcription rate, especially when the provirus integrates in transcriptionally silent region of the host genome. To ensure maximal activation of the LTR, Tat mediates nuclear translocation of NF-kappa-B by interacting with host RELA. Through its interaction with host TBP, Tat may also modulate transcription initiation. Tat can reactivate a latently infected cell by penetrating in it and transactivating its LTR promoter. In the cytoplasm, Tat is thought to act as a translational activator of HIV-1 mRNAs.</text>
</comment>
<comment type="function">
    <text evidence="1">Extracellular circulating Tat can be endocytosed by surrounding uninfected cells via the binding to several surface receptors such as CD26, CXCR4, heparan sulfate proteoglycans (HSPG) or LDLR. Neurons are rarely infected, but they internalize Tat via their LDLR. Through its interaction with nuclear HATs, Tat is potentially able to control the acetylation-dependent cellular gene expression. Modulates the expression of many cellular genes involved in cell survival, proliferation or in coding for cytokines or cytokine receptors. Tat plays a role in T-cell and neurons apoptosis. Tat induced neurotoxicity and apoptosis probably contribute to neuroAIDS. Circulating Tat also acts as a chemokine-like and/or growth factor-like molecule that binds to specific receptors on the surface of the cells, affecting many cellular pathways. In the vascular system, Tat binds to ITGAV/ITGB3 and ITGA5/ITGB1 integrins dimers at the surface of endothelial cells and competes with bFGF for heparin-binding sites, leading to an excess of soluble bFGF.</text>
</comment>
<comment type="subunit">
    <text evidence="1">Interacts with host CCNT1. Associates with the P-TEFb complex composed at least of Tat, P-TEFb (CDK9 and CCNT1), TAR RNA, RNA Pol II. Recruits the HATs CREBBP, TAF1/TFIID, EP300, PCAF and GCN5L2. Interacts with host KAT5/Tip60; this interaction targets the latter to degradation. Interacts with the host deacetylase SIRT1. Interacts with host capping enzyme RNGTT; this interaction stimulates RNGTT. Binds to host KDR, and to the host integrins ITGAV/ITGB3 and ITGA5/ITGB1. Interacts with host KPNB1/importin beta-1 without previous binding to KPNA1/importin alpha-1. Interacts with EIF2AK2. Interacts with host nucleosome assembly protein NAP1L1; this interaction may be required for the transport of Tat within the nucleus, since the two proteins interact at the nuclear rim. Interacts with host C1QBP/SF2P32; this interaction involves lysine-acetylated Tat. Interacts with the host chemokine receptors CCR2, CCR3 and CXCR4. Interacts with host DPP4/CD26; this interaction may trigger an anti-proliferative effect. Interacts with host LDLR. Interacts with the host extracellular matrix metalloproteinase MMP1. Interacts with host PRMT6; this interaction mediates Tat's methylation. Interacts with, and is ubiquitinated by MDM2/Hdm2. Interacts with host PSMC3 and HTATIP2. Interacts with STAB1; this interaction may overcome SATB1-mediated repression of IL2 and IL2RA (interleukin) in T cells by binding to the same domain than HDAC1. Interacts (when acetylated) with human CDK13, thereby increasing HIV-1 mRNA splicing and promoting the production of the doubly spliced HIV-1 protein Nef. Interacts with host TBP; this interaction modulates the activity of transcriptional pre-initiation complex. Interacts with host RELA. Interacts with host PLSCR1; this interaction negatively regulates Tat transactivation activity by altering its subcellular distribution.</text>
</comment>
<comment type="subcellular location">
    <subcellularLocation>
        <location evidence="1">Host nucleus</location>
        <location evidence="1">Host nucleolus</location>
    </subcellularLocation>
    <subcellularLocation>
        <location evidence="1">Host cytoplasm</location>
    </subcellularLocation>
    <subcellularLocation>
        <location evidence="1">Secreted</location>
    </subcellularLocation>
    <text evidence="1">Probably localizes to both nuclear and nucleolar compartments. Nuclear localization is mediated through the interaction of the nuclear localization signal with importin KPNB1. Secretion occurs through a Golgi-independent pathway. Tat is released from infected cells to the extracellular space where it remains associated to the cell membrane, or is secreted into the cerebrospinal fluid and sera. Extracellular Tat can be endocytosed by surrounding uninfected cells via binding to several receptors depending on the cell type.</text>
</comment>
<comment type="alternative products">
    <event type="alternative splicing"/>
    <isoform>
        <id>P0C1K0-1</id>
        <name>Long</name>
        <sequence type="displayed"/>
    </isoform>
    <isoform>
        <id>P0C1K0-2</id>
        <name>Short</name>
        <sequence type="described" ref="VSP_022417"/>
    </isoform>
</comment>
<comment type="domain">
    <text evidence="1">The cell attachment site mediates the interaction with ITGAV/ITGB3 and ITGA5/ITGB1 integrins, leading to vascular cell migration and invasion. This interaction also provides endothelial cells with the adhesion signal they require to grow in response to mitogens.</text>
</comment>
<comment type="domain">
    <text evidence="1">The Cys-rich region may bind 2 zinc ions. This region is involved in binding to KAT5.</text>
</comment>
<comment type="domain">
    <text evidence="1">The transactivation domain mediates the interaction with CCNT1, GCN5L2, and MDM2.</text>
</comment>
<comment type="domain">
    <text evidence="1">The Arg-rich RNA-binding region binds the TAR RNA. This region also mediates the nuclear localization through direct binding to KPNB1 and is involved in Tat's transfer across cell membranes (protein transduction). The same region is required for the interaction with EP300, PCAF, EIF2AK2 and KDR.</text>
</comment>
<comment type="PTM">
    <text evidence="1">Asymmetrical arginine methylation by host PRMT6 seems to diminish the transactivation capacity of Tat and affects the interaction with host CCNT1.</text>
</comment>
<comment type="PTM">
    <text evidence="1">Acetylation by EP300, CREBBP, GCN5L2/GCN5 and PCAF regulates the transactivation activity of Tat. EP300-mediated acetylation of Lys-50 promotes dissociation of Tat from the TAR RNA through the competitive binding to PCAF's bromodomain. In addition, the non-acetylated Tat's N-terminus can also interact with PCAF. PCAF-mediated acetylation of Lys-28 enhances Tat's binding to CCNT1. Lys-50 is deacetylated by SIRT1.</text>
</comment>
<comment type="PTM">
    <text evidence="1">Polyubiquitination by host MDM2 does not target Tat to degradation, but activates its transactivation function and fosters interaction with CCNT1 and TAR RNA.</text>
</comment>
<comment type="PTM">
    <text evidence="1">Phosphorylated by EIF2AK2 on serine and threonine residues adjacent to the basic region important for TAR RNA binding and function. Phosphorylation of Tat by EIF2AK2 is dependent on the prior activation of EIF2AK2 by dsRNA.</text>
</comment>
<comment type="miscellaneous">
    <text evidence="1">HIV-1 lineages are divided in three main groups, M (for Major), O (for Outlier), and N (for New, or Non-M, Non-O). The vast majority of strains found worldwide belong to the group M. Group O seems to be endemic to and largely confined to Cameroon and neighboring countries in West Central Africa, where these viruses represent a small minority of HIV-1 strains. The group N is represented by a limited number of isolates from Cameroonian persons. The group M is further subdivided in 9 clades or subtypes (A to D, F to H, J and K).</text>
</comment>
<comment type="miscellaneous">
    <molecule>Isoform Short</molecule>
    <text evidence="3">Expressed in the late stage of the infection cycle, when unspliced viral RNAs are exported to the cytoplasm by the viral Rev protein.</text>
</comment>
<comment type="similarity">
    <text evidence="1">Belongs to the lentiviruses Tat family.</text>
</comment>
<organismHost>
    <name type="scientific">Homo sapiens</name>
    <name type="common">Human</name>
    <dbReference type="NCBI Taxonomy" id="9606"/>
</organismHost>
<organism>
    <name type="scientific">Human immunodeficiency virus type 1 group M subtype F2 (isolate MP257)</name>
    <name type="common">HIV-1</name>
    <dbReference type="NCBI Taxonomy" id="388823"/>
    <lineage>
        <taxon>Viruses</taxon>
        <taxon>Riboviria</taxon>
        <taxon>Pararnavirae</taxon>
        <taxon>Artverviricota</taxon>
        <taxon>Revtraviricetes</taxon>
        <taxon>Ortervirales</taxon>
        <taxon>Retroviridae</taxon>
        <taxon>Orthoretrovirinae</taxon>
        <taxon>Lentivirus</taxon>
        <taxon>Human immunodeficiency virus type 1</taxon>
    </lineage>
</organism>
<reference key="1">
    <citation type="journal article" date="2000" name="AIDS Res. Hum. Retroviruses">
        <title>Near-full-length genome sequencing of divergent African HIV type 1 subtype F viruses leads to the identification of a new HIV type 1 subtype designated K.</title>
        <authorList>
            <person name="Triques K."/>
            <person name="Bourgeois A."/>
            <person name="Vidale N."/>
            <person name="Mpoudi-Ngole E."/>
            <person name="Mulanga-Kabeya C."/>
            <person name="Nzilambi N."/>
            <person name="Torimiro N."/>
            <person name="Saman E."/>
            <person name="Delaporte E."/>
            <person name="Peeters M."/>
        </authorList>
    </citation>
    <scope>NUCLEOTIDE SEQUENCE [GENOMIC RNA]</scope>
</reference>
<reference key="2">
    <citation type="journal article" date="2005" name="Microbes Infect.">
        <title>Decoding Tat: the biology of HIV Tat posttranslational modifications.</title>
        <authorList>
            <person name="Hetzer C."/>
            <person name="Dormeyer W."/>
            <person name="Schnolzer M."/>
            <person name="Ott M."/>
        </authorList>
    </citation>
    <scope>REVIEW</scope>
    <scope>ALTERNATIVE SPLICING</scope>
</reference>
<reference key="3">
    <citation type="journal article" date="2006" name="Front. Biosci.">
        <title>The multiple functions of HIV-1 Tat: proliferation versus apoptosis.</title>
        <authorList>
            <person name="Peruzzi F."/>
        </authorList>
    </citation>
    <scope>REVIEW</scope>
</reference>
<reference key="4">
    <citation type="journal article" date="2006" name="Microbes Infect.">
        <title>HIV tat and neurotoxicity.</title>
        <authorList>
            <person name="King J.E."/>
            <person name="Eugenin E.A."/>
            <person name="Buckner C.M."/>
            <person name="Berman J.W."/>
        </authorList>
    </citation>
    <scope>REVIEW</scope>
</reference>